<sequence>MQDERPVDQLTEAEAAAELARLAEAIEAANTAYHTHDAPQISDADYDALRLRNRAIEEQFPELRRSDSPSDRVGGALAEGFAKVRHEVRMLSLENAFDLAEVEDWIERIRRYLGHVGDLLFTAEPKIDGLSLSLRYEKGRLVQAATRGDGETGENVTENARTIADLPTELDGAPDLLEVRGEVYMSHEDFAALNGRQEAAGQRLFANPRNAAAGSLRQLDPAVTASRPLRFFAYAWGAHSEPLAATQHEAIARLAALGFTTNPLTRLCTGPEELLAQHAEIERQRAALGYDIDGVVYKVDDLALQRRLGFRASTPRWAIAHKFAAQLAWTQLEGIDVQVGRTGALSPVARLKPVTVGGVVVANATLHNEDYIAGRDSKGQEIRGGKDIRVGDWVQVYRAGDVIPKVADVDLDRRPEGAAPYRFPETCPECGSEAIREPGDSVRRCTGGLICPAQQVERLKHFVSRAAFDIEGLGAKQVEALWRDGWIRQPADIFELPNRYREGIQRLENREGWGRKSAENLFAAIEARRRIALHRLIFALGIRHVGETTATLLATHYGSWAAFEAAMTRAEVGAGPEWQDLLSIDGVGAVLATSLVTAFHQEAERAAVEALAAHLTVEDAEVRAPVASPVAGRIVVFTGTLEKMSRAEAKARAEALGAKVSGSVSARTDLVVAGPGAGSKAKQAAALGIETIDEDGWLRLIGDA</sequence>
<dbReference type="EC" id="6.5.1.2" evidence="1"/>
<dbReference type="EMBL" id="CP001150">
    <property type="protein sequence ID" value="ACM00794.1"/>
    <property type="molecule type" value="Genomic_DNA"/>
</dbReference>
<dbReference type="RefSeq" id="WP_015920404.1">
    <property type="nucleotide sequence ID" value="NC_011963.1"/>
</dbReference>
<dbReference type="SMR" id="B9KRK2"/>
<dbReference type="GeneID" id="67446374"/>
<dbReference type="KEGG" id="rsk:RSKD131_0934"/>
<dbReference type="HOGENOM" id="CLU_007764_2_1_5"/>
<dbReference type="GO" id="GO:0005829">
    <property type="term" value="C:cytosol"/>
    <property type="evidence" value="ECO:0007669"/>
    <property type="project" value="TreeGrafter"/>
</dbReference>
<dbReference type="GO" id="GO:0003911">
    <property type="term" value="F:DNA ligase (NAD+) activity"/>
    <property type="evidence" value="ECO:0007669"/>
    <property type="project" value="UniProtKB-UniRule"/>
</dbReference>
<dbReference type="GO" id="GO:0046872">
    <property type="term" value="F:metal ion binding"/>
    <property type="evidence" value="ECO:0007669"/>
    <property type="project" value="UniProtKB-KW"/>
</dbReference>
<dbReference type="GO" id="GO:0006281">
    <property type="term" value="P:DNA repair"/>
    <property type="evidence" value="ECO:0007669"/>
    <property type="project" value="UniProtKB-KW"/>
</dbReference>
<dbReference type="GO" id="GO:0006260">
    <property type="term" value="P:DNA replication"/>
    <property type="evidence" value="ECO:0007669"/>
    <property type="project" value="UniProtKB-KW"/>
</dbReference>
<dbReference type="CDD" id="cd17748">
    <property type="entry name" value="BRCT_DNA_ligase_like"/>
    <property type="match status" value="1"/>
</dbReference>
<dbReference type="CDD" id="cd00114">
    <property type="entry name" value="LIGANc"/>
    <property type="match status" value="1"/>
</dbReference>
<dbReference type="FunFam" id="1.10.150.20:FF:000007">
    <property type="entry name" value="DNA ligase"/>
    <property type="match status" value="1"/>
</dbReference>
<dbReference type="FunFam" id="3.30.470.30:FF:000001">
    <property type="entry name" value="DNA ligase"/>
    <property type="match status" value="1"/>
</dbReference>
<dbReference type="Gene3D" id="6.20.10.30">
    <property type="match status" value="1"/>
</dbReference>
<dbReference type="Gene3D" id="1.10.150.20">
    <property type="entry name" value="5' to 3' exonuclease, C-terminal subdomain"/>
    <property type="match status" value="2"/>
</dbReference>
<dbReference type="Gene3D" id="3.40.50.10190">
    <property type="entry name" value="BRCT domain"/>
    <property type="match status" value="1"/>
</dbReference>
<dbReference type="Gene3D" id="3.30.470.30">
    <property type="entry name" value="DNA ligase/mRNA capping enzyme"/>
    <property type="match status" value="1"/>
</dbReference>
<dbReference type="Gene3D" id="1.10.287.610">
    <property type="entry name" value="Helix hairpin bin"/>
    <property type="match status" value="1"/>
</dbReference>
<dbReference type="Gene3D" id="2.40.50.140">
    <property type="entry name" value="Nucleic acid-binding proteins"/>
    <property type="match status" value="1"/>
</dbReference>
<dbReference type="HAMAP" id="MF_01588">
    <property type="entry name" value="DNA_ligase_A"/>
    <property type="match status" value="1"/>
</dbReference>
<dbReference type="InterPro" id="IPR001357">
    <property type="entry name" value="BRCT_dom"/>
</dbReference>
<dbReference type="InterPro" id="IPR036420">
    <property type="entry name" value="BRCT_dom_sf"/>
</dbReference>
<dbReference type="InterPro" id="IPR041663">
    <property type="entry name" value="DisA/LigA_HHH"/>
</dbReference>
<dbReference type="InterPro" id="IPR001679">
    <property type="entry name" value="DNA_ligase"/>
</dbReference>
<dbReference type="InterPro" id="IPR018239">
    <property type="entry name" value="DNA_ligase_AS"/>
</dbReference>
<dbReference type="InterPro" id="IPR033136">
    <property type="entry name" value="DNA_ligase_CS"/>
</dbReference>
<dbReference type="InterPro" id="IPR013839">
    <property type="entry name" value="DNAligase_adenylation"/>
</dbReference>
<dbReference type="InterPro" id="IPR013840">
    <property type="entry name" value="DNAligase_N"/>
</dbReference>
<dbReference type="InterPro" id="IPR012340">
    <property type="entry name" value="NA-bd_OB-fold"/>
</dbReference>
<dbReference type="InterPro" id="IPR004150">
    <property type="entry name" value="NAD_DNA_ligase_OB"/>
</dbReference>
<dbReference type="InterPro" id="IPR010994">
    <property type="entry name" value="RuvA_2-like"/>
</dbReference>
<dbReference type="InterPro" id="IPR004149">
    <property type="entry name" value="Znf_DNAligase_C4"/>
</dbReference>
<dbReference type="NCBIfam" id="TIGR00575">
    <property type="entry name" value="dnlj"/>
    <property type="match status" value="1"/>
</dbReference>
<dbReference type="NCBIfam" id="NF005932">
    <property type="entry name" value="PRK07956.1"/>
    <property type="match status" value="1"/>
</dbReference>
<dbReference type="PANTHER" id="PTHR23389">
    <property type="entry name" value="CHROMOSOME TRANSMISSION FIDELITY FACTOR 18"/>
    <property type="match status" value="1"/>
</dbReference>
<dbReference type="PANTHER" id="PTHR23389:SF9">
    <property type="entry name" value="DNA LIGASE"/>
    <property type="match status" value="1"/>
</dbReference>
<dbReference type="Pfam" id="PF00533">
    <property type="entry name" value="BRCT"/>
    <property type="match status" value="1"/>
</dbReference>
<dbReference type="Pfam" id="PF01653">
    <property type="entry name" value="DNA_ligase_aden"/>
    <property type="match status" value="1"/>
</dbReference>
<dbReference type="Pfam" id="PF03120">
    <property type="entry name" value="DNA_ligase_OB"/>
    <property type="match status" value="1"/>
</dbReference>
<dbReference type="Pfam" id="PF03119">
    <property type="entry name" value="DNA_ligase_ZBD"/>
    <property type="match status" value="1"/>
</dbReference>
<dbReference type="Pfam" id="PF12826">
    <property type="entry name" value="HHH_2"/>
    <property type="match status" value="1"/>
</dbReference>
<dbReference type="PIRSF" id="PIRSF001604">
    <property type="entry name" value="LigA"/>
    <property type="match status" value="1"/>
</dbReference>
<dbReference type="SMART" id="SM00292">
    <property type="entry name" value="BRCT"/>
    <property type="match status" value="1"/>
</dbReference>
<dbReference type="SMART" id="SM00532">
    <property type="entry name" value="LIGANc"/>
    <property type="match status" value="1"/>
</dbReference>
<dbReference type="SUPFAM" id="SSF52113">
    <property type="entry name" value="BRCT domain"/>
    <property type="match status" value="1"/>
</dbReference>
<dbReference type="SUPFAM" id="SSF56091">
    <property type="entry name" value="DNA ligase/mRNA capping enzyme, catalytic domain"/>
    <property type="match status" value="1"/>
</dbReference>
<dbReference type="SUPFAM" id="SSF50249">
    <property type="entry name" value="Nucleic acid-binding proteins"/>
    <property type="match status" value="1"/>
</dbReference>
<dbReference type="SUPFAM" id="SSF47781">
    <property type="entry name" value="RuvA domain 2-like"/>
    <property type="match status" value="1"/>
</dbReference>
<dbReference type="PROSITE" id="PS50172">
    <property type="entry name" value="BRCT"/>
    <property type="match status" value="1"/>
</dbReference>
<dbReference type="PROSITE" id="PS01055">
    <property type="entry name" value="DNA_LIGASE_N1"/>
    <property type="match status" value="1"/>
</dbReference>
<dbReference type="PROSITE" id="PS01056">
    <property type="entry name" value="DNA_LIGASE_N2"/>
    <property type="match status" value="1"/>
</dbReference>
<feature type="chain" id="PRO_0000380458" description="DNA ligase">
    <location>
        <begin position="1"/>
        <end position="704"/>
    </location>
</feature>
<feature type="domain" description="BRCT" evidence="1">
    <location>
        <begin position="625"/>
        <end position="704"/>
    </location>
</feature>
<feature type="active site" description="N6-AMP-lysine intermediate" evidence="1">
    <location>
        <position position="126"/>
    </location>
</feature>
<feature type="binding site" evidence="1">
    <location>
        <begin position="43"/>
        <end position="47"/>
    </location>
    <ligand>
        <name>NAD(+)</name>
        <dbReference type="ChEBI" id="CHEBI:57540"/>
    </ligand>
</feature>
<feature type="binding site" evidence="1">
    <location>
        <begin position="92"/>
        <end position="93"/>
    </location>
    <ligand>
        <name>NAD(+)</name>
        <dbReference type="ChEBI" id="CHEBI:57540"/>
    </ligand>
</feature>
<feature type="binding site" evidence="1">
    <location>
        <position position="124"/>
    </location>
    <ligand>
        <name>NAD(+)</name>
        <dbReference type="ChEBI" id="CHEBI:57540"/>
    </ligand>
</feature>
<feature type="binding site" evidence="1">
    <location>
        <position position="147"/>
    </location>
    <ligand>
        <name>NAD(+)</name>
        <dbReference type="ChEBI" id="CHEBI:57540"/>
    </ligand>
</feature>
<feature type="binding site" evidence="1">
    <location>
        <position position="182"/>
    </location>
    <ligand>
        <name>NAD(+)</name>
        <dbReference type="ChEBI" id="CHEBI:57540"/>
    </ligand>
</feature>
<feature type="binding site" evidence="1">
    <location>
        <position position="298"/>
    </location>
    <ligand>
        <name>NAD(+)</name>
        <dbReference type="ChEBI" id="CHEBI:57540"/>
    </ligand>
</feature>
<feature type="binding site" evidence="1">
    <location>
        <position position="322"/>
    </location>
    <ligand>
        <name>NAD(+)</name>
        <dbReference type="ChEBI" id="CHEBI:57540"/>
    </ligand>
</feature>
<feature type="binding site" evidence="1">
    <location>
        <position position="427"/>
    </location>
    <ligand>
        <name>Zn(2+)</name>
        <dbReference type="ChEBI" id="CHEBI:29105"/>
    </ligand>
</feature>
<feature type="binding site" evidence="1">
    <location>
        <position position="430"/>
    </location>
    <ligand>
        <name>Zn(2+)</name>
        <dbReference type="ChEBI" id="CHEBI:29105"/>
    </ligand>
</feature>
<feature type="binding site" evidence="1">
    <location>
        <position position="445"/>
    </location>
    <ligand>
        <name>Zn(2+)</name>
        <dbReference type="ChEBI" id="CHEBI:29105"/>
    </ligand>
</feature>
<feature type="binding site" evidence="1">
    <location>
        <position position="451"/>
    </location>
    <ligand>
        <name>Zn(2+)</name>
        <dbReference type="ChEBI" id="CHEBI:29105"/>
    </ligand>
</feature>
<keyword id="KW-0227">DNA damage</keyword>
<keyword id="KW-0234">DNA repair</keyword>
<keyword id="KW-0235">DNA replication</keyword>
<keyword id="KW-0436">Ligase</keyword>
<keyword id="KW-0460">Magnesium</keyword>
<keyword id="KW-0464">Manganese</keyword>
<keyword id="KW-0479">Metal-binding</keyword>
<keyword id="KW-0520">NAD</keyword>
<keyword id="KW-0862">Zinc</keyword>
<proteinExistence type="inferred from homology"/>
<gene>
    <name evidence="1" type="primary">ligA</name>
    <name type="ordered locus">RSKD131_0934</name>
</gene>
<accession>B9KRK2</accession>
<evidence type="ECO:0000255" key="1">
    <source>
        <dbReference type="HAMAP-Rule" id="MF_01588"/>
    </source>
</evidence>
<comment type="function">
    <text evidence="1">DNA ligase that catalyzes the formation of phosphodiester linkages between 5'-phosphoryl and 3'-hydroxyl groups in double-stranded DNA using NAD as a coenzyme and as the energy source for the reaction. It is essential for DNA replication and repair of damaged DNA.</text>
</comment>
<comment type="catalytic activity">
    <reaction evidence="1">
        <text>NAD(+) + (deoxyribonucleotide)n-3'-hydroxyl + 5'-phospho-(deoxyribonucleotide)m = (deoxyribonucleotide)n+m + AMP + beta-nicotinamide D-nucleotide.</text>
        <dbReference type="EC" id="6.5.1.2"/>
    </reaction>
</comment>
<comment type="cofactor">
    <cofactor evidence="1">
        <name>Mg(2+)</name>
        <dbReference type="ChEBI" id="CHEBI:18420"/>
    </cofactor>
    <cofactor evidence="1">
        <name>Mn(2+)</name>
        <dbReference type="ChEBI" id="CHEBI:29035"/>
    </cofactor>
</comment>
<comment type="similarity">
    <text evidence="1">Belongs to the NAD-dependent DNA ligase family. LigA subfamily.</text>
</comment>
<protein>
    <recommendedName>
        <fullName evidence="1">DNA ligase</fullName>
        <ecNumber evidence="1">6.5.1.2</ecNumber>
    </recommendedName>
    <alternativeName>
        <fullName evidence="1">Polydeoxyribonucleotide synthase [NAD(+)]</fullName>
    </alternativeName>
</protein>
<organism>
    <name type="scientific">Cereibacter sphaeroides (strain KD131 / KCTC 12085)</name>
    <name type="common">Rhodobacter sphaeroides</name>
    <dbReference type="NCBI Taxonomy" id="557760"/>
    <lineage>
        <taxon>Bacteria</taxon>
        <taxon>Pseudomonadati</taxon>
        <taxon>Pseudomonadota</taxon>
        <taxon>Alphaproteobacteria</taxon>
        <taxon>Rhodobacterales</taxon>
        <taxon>Paracoccaceae</taxon>
        <taxon>Cereibacter</taxon>
    </lineage>
</organism>
<reference key="1">
    <citation type="journal article" date="2009" name="J. Bacteriol.">
        <title>Complete genome sequence of Rhodobacter sphaeroides KD131.</title>
        <authorList>
            <person name="Lim S.-K."/>
            <person name="Kim S.J."/>
            <person name="Cha S.H."/>
            <person name="Oh Y.-K."/>
            <person name="Rhee H.-J."/>
            <person name="Kim M.-S."/>
            <person name="Lee J.K."/>
        </authorList>
    </citation>
    <scope>NUCLEOTIDE SEQUENCE [LARGE SCALE GENOMIC DNA]</scope>
    <source>
        <strain>KD131 / KCTC 12085</strain>
    </source>
</reference>
<name>DNLJ_CERSK</name>